<reference key="1">
    <citation type="journal article" date="2006" name="BMC Genomics">
        <title>Complete genome sequence of Shigella flexneri 5b and comparison with Shigella flexneri 2a.</title>
        <authorList>
            <person name="Nie H."/>
            <person name="Yang F."/>
            <person name="Zhang X."/>
            <person name="Yang J."/>
            <person name="Chen L."/>
            <person name="Wang J."/>
            <person name="Xiong Z."/>
            <person name="Peng J."/>
            <person name="Sun L."/>
            <person name="Dong J."/>
            <person name="Xue Y."/>
            <person name="Xu X."/>
            <person name="Chen S."/>
            <person name="Yao Z."/>
            <person name="Shen Y."/>
            <person name="Jin Q."/>
        </authorList>
    </citation>
    <scope>NUCLEOTIDE SEQUENCE [LARGE SCALE GENOMIC DNA]</scope>
    <source>
        <strain>8401</strain>
    </source>
</reference>
<protein>
    <recommendedName>
        <fullName evidence="1">5'/3'-nucleotidase SurE</fullName>
        <ecNumber evidence="1">3.1.3.5</ecNumber>
        <ecNumber evidence="1">3.1.3.6</ecNumber>
    </recommendedName>
    <alternativeName>
        <fullName evidence="1">Exopolyphosphatase</fullName>
        <ecNumber evidence="1">3.6.1.11</ecNumber>
    </alternativeName>
    <alternativeName>
        <fullName evidence="1">Nucleoside monophosphate phosphohydrolase</fullName>
    </alternativeName>
</protein>
<gene>
    <name evidence="1" type="primary">surE</name>
    <name type="ordered locus">SFV_2754</name>
</gene>
<evidence type="ECO:0000255" key="1">
    <source>
        <dbReference type="HAMAP-Rule" id="MF_00060"/>
    </source>
</evidence>
<evidence type="ECO:0000305" key="2"/>
<feature type="chain" id="PRO_0000335283" description="5'/3'-nucleotidase SurE">
    <location>
        <begin position="1"/>
        <end position="253"/>
    </location>
</feature>
<feature type="binding site" evidence="1">
    <location>
        <position position="8"/>
    </location>
    <ligand>
        <name>a divalent metal cation</name>
        <dbReference type="ChEBI" id="CHEBI:60240"/>
    </ligand>
</feature>
<feature type="binding site" evidence="1">
    <location>
        <position position="9"/>
    </location>
    <ligand>
        <name>a divalent metal cation</name>
        <dbReference type="ChEBI" id="CHEBI:60240"/>
    </ligand>
</feature>
<feature type="binding site" evidence="1">
    <location>
        <position position="39"/>
    </location>
    <ligand>
        <name>a divalent metal cation</name>
        <dbReference type="ChEBI" id="CHEBI:60240"/>
    </ligand>
</feature>
<feature type="binding site" evidence="1">
    <location>
        <position position="92"/>
    </location>
    <ligand>
        <name>a divalent metal cation</name>
        <dbReference type="ChEBI" id="CHEBI:60240"/>
    </ligand>
</feature>
<keyword id="KW-0963">Cytoplasm</keyword>
<keyword id="KW-0378">Hydrolase</keyword>
<keyword id="KW-0479">Metal-binding</keyword>
<keyword id="KW-0547">Nucleotide-binding</keyword>
<sequence length="253" mass="26931">MRILLSNDDGVHAPGIQTLAKALREFADVQVVAPDRNRSGASNSLTLESSLRTFTFENGDIAVQMGTPTDCVYLGVNALMRPRPDIVVSGINAGPNLGDDVIYSGTVAAAMEGRHLGFPALAVSLDGHKHYDTAAAVTCSILRALCKEPLRTGRILNINVQDLPLDQIKGIRVTRCGTRHPADQVIPQQDPRGNTLYWIGPPGGKCDAGPGTDFAAVDEGYVSITPLHVDLTAHSAQDVVSDWLNSVGVGTQW</sequence>
<organism>
    <name type="scientific">Shigella flexneri serotype 5b (strain 8401)</name>
    <dbReference type="NCBI Taxonomy" id="373384"/>
    <lineage>
        <taxon>Bacteria</taxon>
        <taxon>Pseudomonadati</taxon>
        <taxon>Pseudomonadota</taxon>
        <taxon>Gammaproteobacteria</taxon>
        <taxon>Enterobacterales</taxon>
        <taxon>Enterobacteriaceae</taxon>
        <taxon>Shigella</taxon>
    </lineage>
</organism>
<name>SURE_SHIF8</name>
<proteinExistence type="inferred from homology"/>
<dbReference type="EC" id="3.1.3.5" evidence="1"/>
<dbReference type="EC" id="3.1.3.6" evidence="1"/>
<dbReference type="EC" id="3.6.1.11" evidence="1"/>
<dbReference type="EMBL" id="CP000266">
    <property type="protein sequence ID" value="ABF04840.1"/>
    <property type="status" value="ALT_INIT"/>
    <property type="molecule type" value="Genomic_DNA"/>
</dbReference>
<dbReference type="RefSeq" id="WP_024260194.1">
    <property type="nucleotide sequence ID" value="NC_008258.1"/>
</dbReference>
<dbReference type="SMR" id="Q0T1H5"/>
<dbReference type="KEGG" id="sfv:SFV_2754"/>
<dbReference type="HOGENOM" id="CLU_045192_1_2_6"/>
<dbReference type="Proteomes" id="UP000000659">
    <property type="component" value="Chromosome"/>
</dbReference>
<dbReference type="GO" id="GO:0005737">
    <property type="term" value="C:cytoplasm"/>
    <property type="evidence" value="ECO:0007669"/>
    <property type="project" value="UniProtKB-SubCell"/>
</dbReference>
<dbReference type="GO" id="GO:0008254">
    <property type="term" value="F:3'-nucleotidase activity"/>
    <property type="evidence" value="ECO:0007669"/>
    <property type="project" value="UniProtKB-UniRule"/>
</dbReference>
<dbReference type="GO" id="GO:0008253">
    <property type="term" value="F:5'-nucleotidase activity"/>
    <property type="evidence" value="ECO:0007669"/>
    <property type="project" value="UniProtKB-UniRule"/>
</dbReference>
<dbReference type="GO" id="GO:0004309">
    <property type="term" value="F:exopolyphosphatase activity"/>
    <property type="evidence" value="ECO:0007669"/>
    <property type="project" value="UniProtKB-UniRule"/>
</dbReference>
<dbReference type="GO" id="GO:0046872">
    <property type="term" value="F:metal ion binding"/>
    <property type="evidence" value="ECO:0007669"/>
    <property type="project" value="UniProtKB-UniRule"/>
</dbReference>
<dbReference type="GO" id="GO:0000166">
    <property type="term" value="F:nucleotide binding"/>
    <property type="evidence" value="ECO:0007669"/>
    <property type="project" value="UniProtKB-KW"/>
</dbReference>
<dbReference type="FunFam" id="3.40.1210.10:FF:000001">
    <property type="entry name" value="5'/3'-nucleotidase SurE"/>
    <property type="match status" value="1"/>
</dbReference>
<dbReference type="Gene3D" id="3.40.1210.10">
    <property type="entry name" value="Survival protein SurE-like phosphatase/nucleotidase"/>
    <property type="match status" value="1"/>
</dbReference>
<dbReference type="HAMAP" id="MF_00060">
    <property type="entry name" value="SurE"/>
    <property type="match status" value="1"/>
</dbReference>
<dbReference type="InterPro" id="IPR030048">
    <property type="entry name" value="SurE"/>
</dbReference>
<dbReference type="InterPro" id="IPR002828">
    <property type="entry name" value="SurE-like_Pase/nucleotidase"/>
</dbReference>
<dbReference type="InterPro" id="IPR036523">
    <property type="entry name" value="SurE-like_sf"/>
</dbReference>
<dbReference type="NCBIfam" id="NF001488">
    <property type="entry name" value="PRK00346.1-1"/>
    <property type="match status" value="1"/>
</dbReference>
<dbReference type="NCBIfam" id="NF001489">
    <property type="entry name" value="PRK00346.1-3"/>
    <property type="match status" value="1"/>
</dbReference>
<dbReference type="NCBIfam" id="NF001490">
    <property type="entry name" value="PRK00346.1-4"/>
    <property type="match status" value="1"/>
</dbReference>
<dbReference type="NCBIfam" id="TIGR00087">
    <property type="entry name" value="surE"/>
    <property type="match status" value="1"/>
</dbReference>
<dbReference type="PANTHER" id="PTHR30457">
    <property type="entry name" value="5'-NUCLEOTIDASE SURE"/>
    <property type="match status" value="1"/>
</dbReference>
<dbReference type="PANTHER" id="PTHR30457:SF12">
    <property type="entry name" value="5'_3'-NUCLEOTIDASE SURE"/>
    <property type="match status" value="1"/>
</dbReference>
<dbReference type="Pfam" id="PF01975">
    <property type="entry name" value="SurE"/>
    <property type="match status" value="1"/>
</dbReference>
<dbReference type="SUPFAM" id="SSF64167">
    <property type="entry name" value="SurE-like"/>
    <property type="match status" value="1"/>
</dbReference>
<accession>Q0T1H5</accession>
<comment type="function">
    <text evidence="1">Nucleotidase with a broad substrate specificity as it can dephosphorylate various ribo- and deoxyribonucleoside 5'-monophosphates and ribonucleoside 3'-monophosphates with highest affinity to 3'-AMP. Also hydrolyzes polyphosphate (exopolyphosphatase activity) with the preference for short-chain-length substrates (P20-25). Might be involved in the regulation of dNTP and NTP pools, and in the turnover of 3'-mononucleotides produced by numerous intracellular RNases (T1, T2, and F) during the degradation of various RNAs.</text>
</comment>
<comment type="catalytic activity">
    <reaction evidence="1">
        <text>a ribonucleoside 5'-phosphate + H2O = a ribonucleoside + phosphate</text>
        <dbReference type="Rhea" id="RHEA:12484"/>
        <dbReference type="ChEBI" id="CHEBI:15377"/>
        <dbReference type="ChEBI" id="CHEBI:18254"/>
        <dbReference type="ChEBI" id="CHEBI:43474"/>
        <dbReference type="ChEBI" id="CHEBI:58043"/>
        <dbReference type="EC" id="3.1.3.5"/>
    </reaction>
</comment>
<comment type="catalytic activity">
    <reaction evidence="1">
        <text>a ribonucleoside 3'-phosphate + H2O = a ribonucleoside + phosphate</text>
        <dbReference type="Rhea" id="RHEA:10144"/>
        <dbReference type="ChEBI" id="CHEBI:13197"/>
        <dbReference type="ChEBI" id="CHEBI:15377"/>
        <dbReference type="ChEBI" id="CHEBI:18254"/>
        <dbReference type="ChEBI" id="CHEBI:43474"/>
        <dbReference type="EC" id="3.1.3.6"/>
    </reaction>
</comment>
<comment type="catalytic activity">
    <reaction evidence="1">
        <text>[phosphate](n) + H2O = [phosphate](n-1) + phosphate + H(+)</text>
        <dbReference type="Rhea" id="RHEA:21528"/>
        <dbReference type="Rhea" id="RHEA-COMP:9859"/>
        <dbReference type="Rhea" id="RHEA-COMP:14279"/>
        <dbReference type="ChEBI" id="CHEBI:15377"/>
        <dbReference type="ChEBI" id="CHEBI:15378"/>
        <dbReference type="ChEBI" id="CHEBI:16838"/>
        <dbReference type="ChEBI" id="CHEBI:43474"/>
        <dbReference type="EC" id="3.6.1.11"/>
    </reaction>
</comment>
<comment type="cofactor">
    <cofactor evidence="1">
        <name>a divalent metal cation</name>
        <dbReference type="ChEBI" id="CHEBI:60240"/>
    </cofactor>
    <text evidence="1">Binds 1 divalent metal cation per subunit.</text>
</comment>
<comment type="subcellular location">
    <subcellularLocation>
        <location evidence="1">Cytoplasm</location>
    </subcellularLocation>
</comment>
<comment type="similarity">
    <text evidence="1">Belongs to the SurE nucleotidase family.</text>
</comment>
<comment type="sequence caution" evidence="2">
    <conflict type="erroneous initiation">
        <sequence resource="EMBL-CDS" id="ABF04840"/>
    </conflict>
</comment>